<accession>Q8Y0J6</accession>
<comment type="similarity">
    <text evidence="2">Belongs to the bacterial ribosomal protein bL32 family.</text>
</comment>
<keyword id="KW-1185">Reference proteome</keyword>
<keyword id="KW-0687">Ribonucleoprotein</keyword>
<keyword id="KW-0689">Ribosomal protein</keyword>
<organism>
    <name type="scientific">Ralstonia nicotianae (strain ATCC BAA-1114 / GMI1000)</name>
    <name type="common">Ralstonia solanacearum</name>
    <dbReference type="NCBI Taxonomy" id="267608"/>
    <lineage>
        <taxon>Bacteria</taxon>
        <taxon>Pseudomonadati</taxon>
        <taxon>Pseudomonadota</taxon>
        <taxon>Betaproteobacteria</taxon>
        <taxon>Burkholderiales</taxon>
        <taxon>Burkholderiaceae</taxon>
        <taxon>Ralstonia</taxon>
        <taxon>Ralstonia solanacearum species complex</taxon>
    </lineage>
</organism>
<feature type="initiator methionine" description="Removed" evidence="1">
    <location>
        <position position="1"/>
    </location>
</feature>
<feature type="chain" id="PRO_0000172391" description="Large ribosomal subunit protein bL32">
    <location>
        <begin position="2"/>
        <end position="59"/>
    </location>
</feature>
<feature type="region of interest" description="Disordered" evidence="3">
    <location>
        <begin position="1"/>
        <end position="24"/>
    </location>
</feature>
<evidence type="ECO:0000250" key="1"/>
<evidence type="ECO:0000255" key="2">
    <source>
        <dbReference type="HAMAP-Rule" id="MF_00340"/>
    </source>
</evidence>
<evidence type="ECO:0000256" key="3">
    <source>
        <dbReference type="SAM" id="MobiDB-lite"/>
    </source>
</evidence>
<evidence type="ECO:0000305" key="4"/>
<protein>
    <recommendedName>
        <fullName evidence="2">Large ribosomal subunit protein bL32</fullName>
    </recommendedName>
    <alternativeName>
        <fullName evidence="4">50S ribosomal protein L32</fullName>
    </alternativeName>
</protein>
<gene>
    <name evidence="2" type="primary">rpmF</name>
    <name type="ordered locus">RSc1048</name>
    <name type="ORF">RS04194</name>
</gene>
<name>RL32_RALN1</name>
<proteinExistence type="inferred from homology"/>
<dbReference type="EMBL" id="AL646052">
    <property type="protein sequence ID" value="CAD14750.1"/>
    <property type="molecule type" value="Genomic_DNA"/>
</dbReference>
<dbReference type="RefSeq" id="WP_011001000.1">
    <property type="nucleotide sequence ID" value="NC_003295.1"/>
</dbReference>
<dbReference type="SMR" id="Q8Y0J6"/>
<dbReference type="STRING" id="267608.RSc1048"/>
<dbReference type="EnsemblBacteria" id="CAD14750">
    <property type="protein sequence ID" value="CAD14750"/>
    <property type="gene ID" value="RSc1048"/>
</dbReference>
<dbReference type="KEGG" id="rso:RSc1048"/>
<dbReference type="eggNOG" id="COG0333">
    <property type="taxonomic scope" value="Bacteria"/>
</dbReference>
<dbReference type="HOGENOM" id="CLU_129084_2_1_4"/>
<dbReference type="Proteomes" id="UP000001436">
    <property type="component" value="Chromosome"/>
</dbReference>
<dbReference type="GO" id="GO:0015934">
    <property type="term" value="C:large ribosomal subunit"/>
    <property type="evidence" value="ECO:0007669"/>
    <property type="project" value="InterPro"/>
</dbReference>
<dbReference type="GO" id="GO:0003735">
    <property type="term" value="F:structural constituent of ribosome"/>
    <property type="evidence" value="ECO:0007669"/>
    <property type="project" value="InterPro"/>
</dbReference>
<dbReference type="GO" id="GO:0006412">
    <property type="term" value="P:translation"/>
    <property type="evidence" value="ECO:0007669"/>
    <property type="project" value="UniProtKB-UniRule"/>
</dbReference>
<dbReference type="HAMAP" id="MF_00340">
    <property type="entry name" value="Ribosomal_bL32"/>
    <property type="match status" value="1"/>
</dbReference>
<dbReference type="InterPro" id="IPR002677">
    <property type="entry name" value="Ribosomal_bL32"/>
</dbReference>
<dbReference type="InterPro" id="IPR044957">
    <property type="entry name" value="Ribosomal_bL32_bact"/>
</dbReference>
<dbReference type="InterPro" id="IPR011332">
    <property type="entry name" value="Ribosomal_zn-bd"/>
</dbReference>
<dbReference type="NCBIfam" id="TIGR01031">
    <property type="entry name" value="rpmF_bact"/>
    <property type="match status" value="1"/>
</dbReference>
<dbReference type="PANTHER" id="PTHR35534">
    <property type="entry name" value="50S RIBOSOMAL PROTEIN L32"/>
    <property type="match status" value="1"/>
</dbReference>
<dbReference type="PANTHER" id="PTHR35534:SF1">
    <property type="entry name" value="LARGE RIBOSOMAL SUBUNIT PROTEIN BL32"/>
    <property type="match status" value="1"/>
</dbReference>
<dbReference type="Pfam" id="PF01783">
    <property type="entry name" value="Ribosomal_L32p"/>
    <property type="match status" value="1"/>
</dbReference>
<dbReference type="SUPFAM" id="SSF57829">
    <property type="entry name" value="Zn-binding ribosomal proteins"/>
    <property type="match status" value="1"/>
</dbReference>
<sequence length="59" mass="6655">MAVQQNKKSPSKRGMHRSHDFLTSAPIAVEATTGEVHLRHHVSPNGYYRGRKVVKTKND</sequence>
<reference key="1">
    <citation type="journal article" date="2002" name="Nature">
        <title>Genome sequence of the plant pathogen Ralstonia solanacearum.</title>
        <authorList>
            <person name="Salanoubat M."/>
            <person name="Genin S."/>
            <person name="Artiguenave F."/>
            <person name="Gouzy J."/>
            <person name="Mangenot S."/>
            <person name="Arlat M."/>
            <person name="Billault A."/>
            <person name="Brottier P."/>
            <person name="Camus J.-C."/>
            <person name="Cattolico L."/>
            <person name="Chandler M."/>
            <person name="Choisne N."/>
            <person name="Claudel-Renard C."/>
            <person name="Cunnac S."/>
            <person name="Demange N."/>
            <person name="Gaspin C."/>
            <person name="Lavie M."/>
            <person name="Moisan A."/>
            <person name="Robert C."/>
            <person name="Saurin W."/>
            <person name="Schiex T."/>
            <person name="Siguier P."/>
            <person name="Thebault P."/>
            <person name="Whalen M."/>
            <person name="Wincker P."/>
            <person name="Levy M."/>
            <person name="Weissenbach J."/>
            <person name="Boucher C.A."/>
        </authorList>
    </citation>
    <scope>NUCLEOTIDE SEQUENCE [LARGE SCALE GENOMIC DNA]</scope>
    <source>
        <strain>ATCC BAA-1114 / GMI1000</strain>
    </source>
</reference>